<name>HEMI2_HEMLE</name>
<reference key="1">
    <citation type="journal article" date="2017" name="Toxicon">
        <title>The small subunit of Hemilipin2, a new heterodimeric phospholipase A2 from Hemiscorpius lepturus scorpion venom, mediates the antiangiogenic effect of the whole protein.</title>
        <authorList>
            <person name="Jridi I."/>
            <person name="Catacchio I."/>
            <person name="Majdoub H."/>
            <person name="Shahbazzadeh D."/>
            <person name="El Ayeb M."/>
            <person name="Frassanito M.A."/>
            <person name="Solimando A.G."/>
            <person name="Ribatti D."/>
            <person name="Vacca A."/>
            <person name="Borchani L."/>
        </authorList>
    </citation>
    <scope>PROTEIN SEQUENCE</scope>
    <scope>SUBCELLULAR LOCATION</scope>
    <scope>FUNCTION</scope>
    <scope>SUBUNIT</scope>
    <scope>MASS SPECTROMETRY</scope>
    <scope>CATALYTIC ACTIVITY</scope>
    <scope>COFACTOR</scope>
    <source>
        <tissue>Venom</tissue>
    </source>
</reference>
<accession>P0DSN5</accession>
<keyword id="KW-0106">Calcium</keyword>
<keyword id="KW-0165">Cleavage on pair of basic residues</keyword>
<keyword id="KW-0903">Direct protein sequencing</keyword>
<keyword id="KW-1015">Disulfide bond</keyword>
<keyword id="KW-0378">Hydrolase</keyword>
<keyword id="KW-0442">Lipid degradation</keyword>
<keyword id="KW-0443">Lipid metabolism</keyword>
<keyword id="KW-0479">Metal-binding</keyword>
<keyword id="KW-0964">Secreted</keyword>
<keyword id="KW-0865">Zymogen</keyword>
<evidence type="ECO:0000250" key="1">
    <source>
        <dbReference type="UniProtKB" id="Q6T178"/>
    </source>
</evidence>
<evidence type="ECO:0000255" key="2">
    <source>
        <dbReference type="PROSITE-ProRule" id="PRU10035"/>
    </source>
</evidence>
<evidence type="ECO:0000269" key="3">
    <source>
    </source>
</evidence>
<evidence type="ECO:0000303" key="4">
    <source>
    </source>
</evidence>
<evidence type="ECO:0000305" key="5"/>
<evidence type="ECO:0000305" key="6">
    <source>
    </source>
</evidence>
<organism>
    <name type="scientific">Hemiscorpius lepturus</name>
    <name type="common">Scorpion</name>
    <dbReference type="NCBI Taxonomy" id="520031"/>
    <lineage>
        <taxon>Eukaryota</taxon>
        <taxon>Metazoa</taxon>
        <taxon>Ecdysozoa</taxon>
        <taxon>Arthropoda</taxon>
        <taxon>Chelicerata</taxon>
        <taxon>Arachnida</taxon>
        <taxon>Scorpiones</taxon>
        <taxon>Iurida</taxon>
        <taxon>Scorpionoidea</taxon>
        <taxon>Hemiscorpiidae</taxon>
    </lineage>
</organism>
<protein>
    <recommendedName>
        <fullName evidence="4">Phospholipase A2 hemilipin-2</fullName>
        <ecNumber evidence="3">3.1.1.4</ecNumber>
    </recommendedName>
    <alternativeName>
        <fullName>Phosphatidylcholine 2-acylhydrolase</fullName>
    </alternativeName>
    <alternativeName>
        <fullName evidence="2">Phospholipase A(2)</fullName>
    </alternativeName>
    <component>
        <recommendedName>
            <fullName evidence="4">Hemilipin-2 large subunit</fullName>
        </recommendedName>
    </component>
    <component>
        <recommendedName>
            <fullName evidence="4">Hemilipin-2 small subunit</fullName>
        </recommendedName>
    </component>
</protein>
<sequence>DSLSEDNWKFVVSSSCETILEILDIGGCAKGVAEYT</sequence>
<feature type="chain" id="PRO_0000447336" description="Hemilipin-2 large subunit" evidence="3">
    <location>
        <begin position="1"/>
        <end position="24" status="greater than"/>
    </location>
</feature>
<feature type="peptide" id="PRO_0000447337" description="Hemilipin-2 small subunit" evidence="3">
    <location>
        <begin position="25"/>
        <end position="36" status="greater than"/>
    </location>
</feature>
<feature type="disulfide bond" evidence="1">
    <location>
        <begin position="16"/>
        <end status="unknown"/>
    </location>
</feature>
<feature type="disulfide bond" description="Interchain (between large and small chains)" evidence="1">
    <location>
        <begin status="unknown"/>
        <end position="28"/>
    </location>
</feature>
<feature type="non-consecutive residues" evidence="5">
    <location>
        <begin position="24"/>
        <end position="25"/>
    </location>
</feature>
<feature type="non-terminal residue" evidence="5">
    <location>
        <position position="36"/>
    </location>
</feature>
<comment type="function">
    <text evidence="3">Scorpion venom phospholipase A2 (PLA2) that impacts angiogenesis in vitro and in vivo without showing any cytotoxic or apoptotic signs (PubMed:27940138). The antiangiogenic effect is independent from the catalytic activity and seems to be held by its small subunit (PubMed:27940138). PLA2 catalyzes the calcium-dependent hydrolysis of the 2-acyl groups in 3-sn-phosphoglycerides.</text>
</comment>
<comment type="catalytic activity">
    <reaction evidence="3">
        <text>a 1,2-diacyl-sn-glycero-3-phosphocholine + H2O = a 1-acyl-sn-glycero-3-phosphocholine + a fatty acid + H(+)</text>
        <dbReference type="Rhea" id="RHEA:15801"/>
        <dbReference type="ChEBI" id="CHEBI:15377"/>
        <dbReference type="ChEBI" id="CHEBI:15378"/>
        <dbReference type="ChEBI" id="CHEBI:28868"/>
        <dbReference type="ChEBI" id="CHEBI:57643"/>
        <dbReference type="ChEBI" id="CHEBI:58168"/>
        <dbReference type="EC" id="3.1.1.4"/>
    </reaction>
</comment>
<comment type="cofactor">
    <cofactor evidence="3">
        <name>Ca(2+)</name>
        <dbReference type="ChEBI" id="CHEBI:29108"/>
    </cofactor>
    <text evidence="3">Binds 1 Ca(2+) ion.</text>
</comment>
<comment type="subunit">
    <text evidence="3">Heterodimer composed of a small subunit and a large subunit; disulfid-linked.</text>
</comment>
<comment type="subcellular location">
    <subcellularLocation>
        <location evidence="3">Secreted</location>
    </subcellularLocation>
</comment>
<comment type="tissue specificity">
    <text evidence="6">Expressed by the venom gland.</text>
</comment>
<comment type="mass spectrometry">
    <molecule>Hemilipin-2 large subunit</molecule>
</comment>
<comment type="mass spectrometry">
    <molecule>Hemilipin-2 small subunit</molecule>
</comment>
<comment type="similarity">
    <text evidence="5">Belongs to the phospholipase A2 family. Group III subfamily.</text>
</comment>
<comment type="caution">
    <text evidence="6">The large subunit has no homology with other group III PA2 family members, but the small subunit does.</text>
</comment>
<proteinExistence type="evidence at protein level"/>
<dbReference type="EC" id="3.1.1.4" evidence="3"/>
<dbReference type="GO" id="GO:0005576">
    <property type="term" value="C:extracellular region"/>
    <property type="evidence" value="ECO:0007669"/>
    <property type="project" value="UniProtKB-SubCell"/>
</dbReference>
<dbReference type="GO" id="GO:0046872">
    <property type="term" value="F:metal ion binding"/>
    <property type="evidence" value="ECO:0007669"/>
    <property type="project" value="UniProtKB-KW"/>
</dbReference>
<dbReference type="GO" id="GO:0004623">
    <property type="term" value="F:phospholipase A2 activity"/>
    <property type="evidence" value="ECO:0007669"/>
    <property type="project" value="UniProtKB-EC"/>
</dbReference>
<dbReference type="GO" id="GO:0016042">
    <property type="term" value="P:lipid catabolic process"/>
    <property type="evidence" value="ECO:0007669"/>
    <property type="project" value="UniProtKB-KW"/>
</dbReference>